<feature type="chain" id="PRO_0000241274" description="Aspartyl/glutamyl-tRNA(Asn/Gln) amidotransferase subunit B">
    <location>
        <begin position="1"/>
        <end position="508"/>
    </location>
</feature>
<accession>Q2S1B9</accession>
<reference key="1">
    <citation type="journal article" date="2005" name="Proc. Natl. Acad. Sci. U.S.A.">
        <title>The genome of Salinibacter ruber: convergence and gene exchange among hyperhalophilic bacteria and archaea.</title>
        <authorList>
            <person name="Mongodin E.F."/>
            <person name="Nelson K.E."/>
            <person name="Daugherty S."/>
            <person name="DeBoy R.T."/>
            <person name="Wister J."/>
            <person name="Khouri H."/>
            <person name="Weidman J."/>
            <person name="Walsh D.A."/>
            <person name="Papke R.T."/>
            <person name="Sanchez Perez G."/>
            <person name="Sharma A.K."/>
            <person name="Nesbo C.L."/>
            <person name="MacLeod D."/>
            <person name="Bapteste E."/>
            <person name="Doolittle W.F."/>
            <person name="Charlebois R.L."/>
            <person name="Legault B."/>
            <person name="Rodriguez-Valera F."/>
        </authorList>
    </citation>
    <scope>NUCLEOTIDE SEQUENCE [LARGE SCALE GENOMIC DNA]</scope>
    <source>
        <strain>DSM 13855 / CECT 5946 / M31</strain>
    </source>
</reference>
<protein>
    <recommendedName>
        <fullName evidence="1">Aspartyl/glutamyl-tRNA(Asn/Gln) amidotransferase subunit B</fullName>
        <shortName evidence="1">Asp/Glu-ADT subunit B</shortName>
        <ecNumber evidence="1">6.3.5.-</ecNumber>
    </recommendedName>
</protein>
<gene>
    <name evidence="1" type="primary">gatB</name>
    <name type="ordered locus">SRU_1902</name>
</gene>
<proteinExistence type="inferred from homology"/>
<name>GATB_SALRD</name>
<organism>
    <name type="scientific">Salinibacter ruber (strain DSM 13855 / M31)</name>
    <dbReference type="NCBI Taxonomy" id="309807"/>
    <lineage>
        <taxon>Bacteria</taxon>
        <taxon>Pseudomonadati</taxon>
        <taxon>Rhodothermota</taxon>
        <taxon>Rhodothermia</taxon>
        <taxon>Rhodothermales</taxon>
        <taxon>Salinibacteraceae</taxon>
        <taxon>Salinibacter</taxon>
    </lineage>
</organism>
<keyword id="KW-0067">ATP-binding</keyword>
<keyword id="KW-0436">Ligase</keyword>
<keyword id="KW-0547">Nucleotide-binding</keyword>
<keyword id="KW-0648">Protein biosynthesis</keyword>
<keyword id="KW-1185">Reference proteome</keyword>
<dbReference type="EC" id="6.3.5.-" evidence="1"/>
<dbReference type="EMBL" id="CP000159">
    <property type="protein sequence ID" value="ABC45766.1"/>
    <property type="molecule type" value="Genomic_DNA"/>
</dbReference>
<dbReference type="RefSeq" id="WP_011404637.1">
    <property type="nucleotide sequence ID" value="NC_007677.1"/>
</dbReference>
<dbReference type="RefSeq" id="YP_446012.1">
    <property type="nucleotide sequence ID" value="NC_007677.1"/>
</dbReference>
<dbReference type="SMR" id="Q2S1B9"/>
<dbReference type="STRING" id="309807.SRU_1902"/>
<dbReference type="EnsemblBacteria" id="ABC45766">
    <property type="protein sequence ID" value="ABC45766"/>
    <property type="gene ID" value="SRU_1902"/>
</dbReference>
<dbReference type="KEGG" id="sru:SRU_1902"/>
<dbReference type="PATRIC" id="fig|309807.25.peg.1970"/>
<dbReference type="eggNOG" id="COG0064">
    <property type="taxonomic scope" value="Bacteria"/>
</dbReference>
<dbReference type="HOGENOM" id="CLU_019240_0_0_10"/>
<dbReference type="OrthoDB" id="9804078at2"/>
<dbReference type="Proteomes" id="UP000008674">
    <property type="component" value="Chromosome"/>
</dbReference>
<dbReference type="GO" id="GO:0050566">
    <property type="term" value="F:asparaginyl-tRNA synthase (glutamine-hydrolyzing) activity"/>
    <property type="evidence" value="ECO:0007669"/>
    <property type="project" value="RHEA"/>
</dbReference>
<dbReference type="GO" id="GO:0005524">
    <property type="term" value="F:ATP binding"/>
    <property type="evidence" value="ECO:0007669"/>
    <property type="project" value="UniProtKB-KW"/>
</dbReference>
<dbReference type="GO" id="GO:0050567">
    <property type="term" value="F:glutaminyl-tRNA synthase (glutamine-hydrolyzing) activity"/>
    <property type="evidence" value="ECO:0007669"/>
    <property type="project" value="UniProtKB-UniRule"/>
</dbReference>
<dbReference type="GO" id="GO:0070681">
    <property type="term" value="P:glutaminyl-tRNAGln biosynthesis via transamidation"/>
    <property type="evidence" value="ECO:0007669"/>
    <property type="project" value="TreeGrafter"/>
</dbReference>
<dbReference type="GO" id="GO:0006412">
    <property type="term" value="P:translation"/>
    <property type="evidence" value="ECO:0007669"/>
    <property type="project" value="UniProtKB-UniRule"/>
</dbReference>
<dbReference type="FunFam" id="1.10.10.410:FF:000001">
    <property type="entry name" value="Aspartyl/glutamyl-tRNA(Asn/Gln) amidotransferase subunit B"/>
    <property type="match status" value="1"/>
</dbReference>
<dbReference type="FunFam" id="1.10.150.380:FF:000001">
    <property type="entry name" value="Aspartyl/glutamyl-tRNA(Asn/Gln) amidotransferase subunit B"/>
    <property type="match status" value="1"/>
</dbReference>
<dbReference type="Gene3D" id="1.10.10.410">
    <property type="match status" value="1"/>
</dbReference>
<dbReference type="Gene3D" id="1.10.150.380">
    <property type="entry name" value="GatB domain, N-terminal subdomain"/>
    <property type="match status" value="1"/>
</dbReference>
<dbReference type="HAMAP" id="MF_00121">
    <property type="entry name" value="GatB"/>
    <property type="match status" value="1"/>
</dbReference>
<dbReference type="InterPro" id="IPR017959">
    <property type="entry name" value="Asn/Gln-tRNA_amidoTrfase_suB/E"/>
</dbReference>
<dbReference type="InterPro" id="IPR006075">
    <property type="entry name" value="Asn/Gln-tRNA_Trfase_suB/E_cat"/>
</dbReference>
<dbReference type="InterPro" id="IPR018027">
    <property type="entry name" value="Asn/Gln_amidotransferase"/>
</dbReference>
<dbReference type="InterPro" id="IPR003789">
    <property type="entry name" value="Asn/Gln_tRNA_amidoTrase-B-like"/>
</dbReference>
<dbReference type="InterPro" id="IPR004413">
    <property type="entry name" value="GatB"/>
</dbReference>
<dbReference type="InterPro" id="IPR042114">
    <property type="entry name" value="GatB_C_1"/>
</dbReference>
<dbReference type="InterPro" id="IPR023168">
    <property type="entry name" value="GatB_Yqey_C_2"/>
</dbReference>
<dbReference type="InterPro" id="IPR014746">
    <property type="entry name" value="Gln_synth/guanido_kin_cat_dom"/>
</dbReference>
<dbReference type="NCBIfam" id="TIGR00133">
    <property type="entry name" value="gatB"/>
    <property type="match status" value="1"/>
</dbReference>
<dbReference type="NCBIfam" id="NF004012">
    <property type="entry name" value="PRK05477.1-2"/>
    <property type="match status" value="1"/>
</dbReference>
<dbReference type="NCBIfam" id="NF004014">
    <property type="entry name" value="PRK05477.1-4"/>
    <property type="match status" value="1"/>
</dbReference>
<dbReference type="PANTHER" id="PTHR11659">
    <property type="entry name" value="GLUTAMYL-TRNA GLN AMIDOTRANSFERASE SUBUNIT B MITOCHONDRIAL AND PROKARYOTIC PET112-RELATED"/>
    <property type="match status" value="1"/>
</dbReference>
<dbReference type="PANTHER" id="PTHR11659:SF0">
    <property type="entry name" value="GLUTAMYL-TRNA(GLN) AMIDOTRANSFERASE SUBUNIT B, MITOCHONDRIAL"/>
    <property type="match status" value="1"/>
</dbReference>
<dbReference type="Pfam" id="PF02934">
    <property type="entry name" value="GatB_N"/>
    <property type="match status" value="1"/>
</dbReference>
<dbReference type="Pfam" id="PF02637">
    <property type="entry name" value="GatB_Yqey"/>
    <property type="match status" value="1"/>
</dbReference>
<dbReference type="SMART" id="SM00845">
    <property type="entry name" value="GatB_Yqey"/>
    <property type="match status" value="1"/>
</dbReference>
<dbReference type="SUPFAM" id="SSF89095">
    <property type="entry name" value="GatB/YqeY motif"/>
    <property type="match status" value="1"/>
</dbReference>
<dbReference type="SUPFAM" id="SSF55931">
    <property type="entry name" value="Glutamine synthetase/guanido kinase"/>
    <property type="match status" value="1"/>
</dbReference>
<sequence>MAYERYEPVIGLEVHVQLQTNAKIFSPDAAAFGAAPNTQVDPISLGHPGTLPVLNETVVKHALRLGVATHCSIADRSAFARKHYFYPDLPKGYQISQYDTPICYDGYLEVFPGEEEDASPSAPDSRRVGLTRIHMEEDAGKSVHASAGGTTRLDNNRCGVPLLEMVTEPDLRSPREASLFLQRLRQLVRYLGISDGNMEEGSLRCDANVSVRPQGREAFGTRTELKNMNSMRHVEQALDYEIARQIAAEERGESITQQTLLWDADAGTTRPMRSKEEAHDYRYLPDPDLVEVRIEDATVDEVRANLPELPRARRRRFVEEVGLPAYDAGVLTEERAVADYFEEALRHLYKRTKGGDTDAQAKAVSNFIMTEVMRVLNERDLSVSELGVGPERLAQLVFLRLQDKVSSNGAQEVFEAMLDAPDKSAGRIADERDLIQVTDRGAIAPVVEDVLNDNPDKVNTYLGGKDGLLGFFIGQVMQRFDGSPNPELVRSLLREKLDARRDTANVDE</sequence>
<evidence type="ECO:0000255" key="1">
    <source>
        <dbReference type="HAMAP-Rule" id="MF_00121"/>
    </source>
</evidence>
<comment type="function">
    <text evidence="1">Allows the formation of correctly charged Asn-tRNA(Asn) or Gln-tRNA(Gln) through the transamidation of misacylated Asp-tRNA(Asn) or Glu-tRNA(Gln) in organisms which lack either or both of asparaginyl-tRNA or glutaminyl-tRNA synthetases. The reaction takes place in the presence of glutamine and ATP through an activated phospho-Asp-tRNA(Asn) or phospho-Glu-tRNA(Gln).</text>
</comment>
<comment type="catalytic activity">
    <reaction evidence="1">
        <text>L-glutamyl-tRNA(Gln) + L-glutamine + ATP + H2O = L-glutaminyl-tRNA(Gln) + L-glutamate + ADP + phosphate + H(+)</text>
        <dbReference type="Rhea" id="RHEA:17521"/>
        <dbReference type="Rhea" id="RHEA-COMP:9681"/>
        <dbReference type="Rhea" id="RHEA-COMP:9684"/>
        <dbReference type="ChEBI" id="CHEBI:15377"/>
        <dbReference type="ChEBI" id="CHEBI:15378"/>
        <dbReference type="ChEBI" id="CHEBI:29985"/>
        <dbReference type="ChEBI" id="CHEBI:30616"/>
        <dbReference type="ChEBI" id="CHEBI:43474"/>
        <dbReference type="ChEBI" id="CHEBI:58359"/>
        <dbReference type="ChEBI" id="CHEBI:78520"/>
        <dbReference type="ChEBI" id="CHEBI:78521"/>
        <dbReference type="ChEBI" id="CHEBI:456216"/>
    </reaction>
</comment>
<comment type="catalytic activity">
    <reaction evidence="1">
        <text>L-aspartyl-tRNA(Asn) + L-glutamine + ATP + H2O = L-asparaginyl-tRNA(Asn) + L-glutamate + ADP + phosphate + 2 H(+)</text>
        <dbReference type="Rhea" id="RHEA:14513"/>
        <dbReference type="Rhea" id="RHEA-COMP:9674"/>
        <dbReference type="Rhea" id="RHEA-COMP:9677"/>
        <dbReference type="ChEBI" id="CHEBI:15377"/>
        <dbReference type="ChEBI" id="CHEBI:15378"/>
        <dbReference type="ChEBI" id="CHEBI:29985"/>
        <dbReference type="ChEBI" id="CHEBI:30616"/>
        <dbReference type="ChEBI" id="CHEBI:43474"/>
        <dbReference type="ChEBI" id="CHEBI:58359"/>
        <dbReference type="ChEBI" id="CHEBI:78515"/>
        <dbReference type="ChEBI" id="CHEBI:78516"/>
        <dbReference type="ChEBI" id="CHEBI:456216"/>
    </reaction>
</comment>
<comment type="subunit">
    <text evidence="1">Heterotrimer of A, B and C subunits.</text>
</comment>
<comment type="similarity">
    <text evidence="1">Belongs to the GatB/GatE family. GatB subfamily.</text>
</comment>